<proteinExistence type="inferred from homology"/>
<evidence type="ECO:0000255" key="1">
    <source>
        <dbReference type="HAMAP-Rule" id="MF_00158"/>
    </source>
</evidence>
<comment type="function">
    <text evidence="1">Catalyzes the condensation of pantoate with beta-alanine in an ATP-dependent reaction via a pantoyl-adenylate intermediate.</text>
</comment>
<comment type="catalytic activity">
    <reaction evidence="1">
        <text>(R)-pantoate + beta-alanine + ATP = (R)-pantothenate + AMP + diphosphate + H(+)</text>
        <dbReference type="Rhea" id="RHEA:10912"/>
        <dbReference type="ChEBI" id="CHEBI:15378"/>
        <dbReference type="ChEBI" id="CHEBI:15980"/>
        <dbReference type="ChEBI" id="CHEBI:29032"/>
        <dbReference type="ChEBI" id="CHEBI:30616"/>
        <dbReference type="ChEBI" id="CHEBI:33019"/>
        <dbReference type="ChEBI" id="CHEBI:57966"/>
        <dbReference type="ChEBI" id="CHEBI:456215"/>
        <dbReference type="EC" id="6.3.2.1"/>
    </reaction>
</comment>
<comment type="pathway">
    <text evidence="1">Cofactor biosynthesis; (R)-pantothenate biosynthesis; (R)-pantothenate from (R)-pantoate and beta-alanine: step 1/1.</text>
</comment>
<comment type="subunit">
    <text evidence="1">Homodimer.</text>
</comment>
<comment type="subcellular location">
    <subcellularLocation>
        <location evidence="1">Cytoplasm</location>
    </subcellularLocation>
</comment>
<comment type="miscellaneous">
    <text evidence="1">The reaction proceeds by a bi uni uni bi ping pong mechanism.</text>
</comment>
<comment type="similarity">
    <text evidence="1">Belongs to the pantothenate synthetase family.</text>
</comment>
<organism>
    <name type="scientific">Marinobacter nauticus (strain ATCC 700491 / DSM 11845 / VT8)</name>
    <name type="common">Marinobacter aquaeolei</name>
    <dbReference type="NCBI Taxonomy" id="351348"/>
    <lineage>
        <taxon>Bacteria</taxon>
        <taxon>Pseudomonadati</taxon>
        <taxon>Pseudomonadota</taxon>
        <taxon>Gammaproteobacteria</taxon>
        <taxon>Pseudomonadales</taxon>
        <taxon>Marinobacteraceae</taxon>
        <taxon>Marinobacter</taxon>
    </lineage>
</organism>
<accession>A1TYE5</accession>
<reference key="1">
    <citation type="journal article" date="2011" name="Appl. Environ. Microbiol.">
        <title>Genomic potential of Marinobacter aquaeolei, a biogeochemical 'opportunitroph'.</title>
        <authorList>
            <person name="Singer E."/>
            <person name="Webb E.A."/>
            <person name="Nelson W.C."/>
            <person name="Heidelberg J.F."/>
            <person name="Ivanova N."/>
            <person name="Pati A."/>
            <person name="Edwards K.J."/>
        </authorList>
    </citation>
    <scope>NUCLEOTIDE SEQUENCE [LARGE SCALE GENOMIC DNA]</scope>
    <source>
        <strain>ATCC 700491 / DSM 11845 / VT8</strain>
    </source>
</reference>
<dbReference type="EC" id="6.3.2.1" evidence="1"/>
<dbReference type="EMBL" id="CP000514">
    <property type="protein sequence ID" value="ABM17764.1"/>
    <property type="molecule type" value="Genomic_DNA"/>
</dbReference>
<dbReference type="RefSeq" id="WP_011784196.1">
    <property type="nucleotide sequence ID" value="NC_008740.1"/>
</dbReference>
<dbReference type="SMR" id="A1TYE5"/>
<dbReference type="STRING" id="351348.Maqu_0666"/>
<dbReference type="KEGG" id="maq:Maqu_0666"/>
<dbReference type="eggNOG" id="COG0414">
    <property type="taxonomic scope" value="Bacteria"/>
</dbReference>
<dbReference type="HOGENOM" id="CLU_047148_0_0_6"/>
<dbReference type="OrthoDB" id="9773087at2"/>
<dbReference type="UniPathway" id="UPA00028">
    <property type="reaction ID" value="UER00005"/>
</dbReference>
<dbReference type="Proteomes" id="UP000000998">
    <property type="component" value="Chromosome"/>
</dbReference>
<dbReference type="GO" id="GO:0005829">
    <property type="term" value="C:cytosol"/>
    <property type="evidence" value="ECO:0007669"/>
    <property type="project" value="TreeGrafter"/>
</dbReference>
<dbReference type="GO" id="GO:0005524">
    <property type="term" value="F:ATP binding"/>
    <property type="evidence" value="ECO:0007669"/>
    <property type="project" value="UniProtKB-KW"/>
</dbReference>
<dbReference type="GO" id="GO:0004592">
    <property type="term" value="F:pantoate-beta-alanine ligase activity"/>
    <property type="evidence" value="ECO:0007669"/>
    <property type="project" value="UniProtKB-UniRule"/>
</dbReference>
<dbReference type="GO" id="GO:0015940">
    <property type="term" value="P:pantothenate biosynthetic process"/>
    <property type="evidence" value="ECO:0007669"/>
    <property type="project" value="UniProtKB-UniRule"/>
</dbReference>
<dbReference type="CDD" id="cd00560">
    <property type="entry name" value="PanC"/>
    <property type="match status" value="1"/>
</dbReference>
<dbReference type="FunFam" id="3.30.1300.10:FF:000001">
    <property type="entry name" value="Pantothenate synthetase"/>
    <property type="match status" value="1"/>
</dbReference>
<dbReference type="FunFam" id="3.40.50.620:FF:000013">
    <property type="entry name" value="Pantothenate synthetase"/>
    <property type="match status" value="1"/>
</dbReference>
<dbReference type="Gene3D" id="3.40.50.620">
    <property type="entry name" value="HUPs"/>
    <property type="match status" value="1"/>
</dbReference>
<dbReference type="Gene3D" id="3.30.1300.10">
    <property type="entry name" value="Pantoate-beta-alanine ligase, C-terminal domain"/>
    <property type="match status" value="1"/>
</dbReference>
<dbReference type="HAMAP" id="MF_00158">
    <property type="entry name" value="PanC"/>
    <property type="match status" value="1"/>
</dbReference>
<dbReference type="InterPro" id="IPR003721">
    <property type="entry name" value="Pantoate_ligase"/>
</dbReference>
<dbReference type="InterPro" id="IPR042176">
    <property type="entry name" value="Pantoate_ligase_C"/>
</dbReference>
<dbReference type="InterPro" id="IPR014729">
    <property type="entry name" value="Rossmann-like_a/b/a_fold"/>
</dbReference>
<dbReference type="NCBIfam" id="TIGR00018">
    <property type="entry name" value="panC"/>
    <property type="match status" value="1"/>
</dbReference>
<dbReference type="PANTHER" id="PTHR21299">
    <property type="entry name" value="CYTIDYLATE KINASE/PANTOATE-BETA-ALANINE LIGASE"/>
    <property type="match status" value="1"/>
</dbReference>
<dbReference type="PANTHER" id="PTHR21299:SF1">
    <property type="entry name" value="PANTOATE--BETA-ALANINE LIGASE"/>
    <property type="match status" value="1"/>
</dbReference>
<dbReference type="Pfam" id="PF02569">
    <property type="entry name" value="Pantoate_ligase"/>
    <property type="match status" value="1"/>
</dbReference>
<dbReference type="SUPFAM" id="SSF52374">
    <property type="entry name" value="Nucleotidylyl transferase"/>
    <property type="match status" value="1"/>
</dbReference>
<sequence>MRTVHSLKELRTILRGYRQQGKTIGLVPTMGNLHEGHISLVRKAAEASDIVVTSIFVNPMQFGANEDLDTYPRTLVEDQEKLAAAGNTLVFAPGVEEIYPEGLANQTKVVVPEVSEGHCGASRPGHFEGVATVVTMLFNMVQPDIAVFGEKDFQQLAVIRKLARDLMIPVEVIGAPTVREDDGLAKSSRNGYLSEQERGIAPVVFRTLRHTADQLAQGRTDYSILEQEARDALSEAGLRPDYFNIVNSLTLKPASKDDRELTLLVAAFLGTTRLIDNLSITR</sequence>
<name>PANC_MARN8</name>
<gene>
    <name evidence="1" type="primary">panC</name>
    <name type="ordered locus">Maqu_0666</name>
</gene>
<protein>
    <recommendedName>
        <fullName evidence="1">Pantothenate synthetase</fullName>
        <shortName evidence="1">PS</shortName>
        <ecNumber evidence="1">6.3.2.1</ecNumber>
    </recommendedName>
    <alternativeName>
        <fullName evidence="1">Pantoate--beta-alanine ligase</fullName>
    </alternativeName>
    <alternativeName>
        <fullName evidence="1">Pantoate-activating enzyme</fullName>
    </alternativeName>
</protein>
<keyword id="KW-0067">ATP-binding</keyword>
<keyword id="KW-0963">Cytoplasm</keyword>
<keyword id="KW-0436">Ligase</keyword>
<keyword id="KW-0547">Nucleotide-binding</keyword>
<keyword id="KW-0566">Pantothenate biosynthesis</keyword>
<feature type="chain" id="PRO_0000305480" description="Pantothenate synthetase">
    <location>
        <begin position="1"/>
        <end position="282"/>
    </location>
</feature>
<feature type="active site" description="Proton donor" evidence="1">
    <location>
        <position position="37"/>
    </location>
</feature>
<feature type="binding site" evidence="1">
    <location>
        <begin position="30"/>
        <end position="37"/>
    </location>
    <ligand>
        <name>ATP</name>
        <dbReference type="ChEBI" id="CHEBI:30616"/>
    </ligand>
</feature>
<feature type="binding site" evidence="1">
    <location>
        <position position="61"/>
    </location>
    <ligand>
        <name>(R)-pantoate</name>
        <dbReference type="ChEBI" id="CHEBI:15980"/>
    </ligand>
</feature>
<feature type="binding site" evidence="1">
    <location>
        <position position="61"/>
    </location>
    <ligand>
        <name>beta-alanine</name>
        <dbReference type="ChEBI" id="CHEBI:57966"/>
    </ligand>
</feature>
<feature type="binding site" evidence="1">
    <location>
        <begin position="149"/>
        <end position="152"/>
    </location>
    <ligand>
        <name>ATP</name>
        <dbReference type="ChEBI" id="CHEBI:30616"/>
    </ligand>
</feature>
<feature type="binding site" evidence="1">
    <location>
        <position position="155"/>
    </location>
    <ligand>
        <name>(R)-pantoate</name>
        <dbReference type="ChEBI" id="CHEBI:15980"/>
    </ligand>
</feature>
<feature type="binding site" evidence="1">
    <location>
        <position position="178"/>
    </location>
    <ligand>
        <name>ATP</name>
        <dbReference type="ChEBI" id="CHEBI:30616"/>
    </ligand>
</feature>
<feature type="binding site" evidence="1">
    <location>
        <begin position="186"/>
        <end position="189"/>
    </location>
    <ligand>
        <name>ATP</name>
        <dbReference type="ChEBI" id="CHEBI:30616"/>
    </ligand>
</feature>